<gene>
    <name evidence="1" type="primary">pth</name>
    <name type="ordered locus">SPAB_01443</name>
</gene>
<proteinExistence type="inferred from homology"/>
<reference key="1">
    <citation type="submission" date="2007-11" db="EMBL/GenBank/DDBJ databases">
        <authorList>
            <consortium name="The Salmonella enterica serovar Paratyphi B Genome Sequencing Project"/>
            <person name="McClelland M."/>
            <person name="Sanderson E.K."/>
            <person name="Porwollik S."/>
            <person name="Spieth J."/>
            <person name="Clifton W.S."/>
            <person name="Fulton R."/>
            <person name="Cordes M."/>
            <person name="Wollam A."/>
            <person name="Shah N."/>
            <person name="Pepin K."/>
            <person name="Bhonagiri V."/>
            <person name="Nash W."/>
            <person name="Johnson M."/>
            <person name="Thiruvilangam P."/>
            <person name="Wilson R."/>
        </authorList>
    </citation>
    <scope>NUCLEOTIDE SEQUENCE [LARGE SCALE GENOMIC DNA]</scope>
    <source>
        <strain>ATCC BAA-1250 / SPB7</strain>
    </source>
</reference>
<name>PTH_SALPB</name>
<protein>
    <recommendedName>
        <fullName evidence="1">Peptidyl-tRNA hydrolase</fullName>
        <shortName evidence="1">Pth</shortName>
        <ecNumber evidence="1">3.1.1.29</ecNumber>
    </recommendedName>
</protein>
<sequence length="194" mass="21192">MAIKLIVGLANPGAEYAATRHNAGAWYIDLLAERLRAPLREEPKFFGYTSRITLEGEDVRLLVPTTFMNLSGKAVGAMASFYRIQPDEILVAHDELDLPPGVAKFKLGGGHGGHNGLKDIISKLGNNPNFHRLRVGIGHPGDKNKVVGFVLGKPPVSEQKLIDEAIDEAARCTELWFKEGLAKATSRLHTFKAQ</sequence>
<keyword id="KW-0963">Cytoplasm</keyword>
<keyword id="KW-0378">Hydrolase</keyword>
<keyword id="KW-0694">RNA-binding</keyword>
<keyword id="KW-0820">tRNA-binding</keyword>
<evidence type="ECO:0000255" key="1">
    <source>
        <dbReference type="HAMAP-Rule" id="MF_00083"/>
    </source>
</evidence>
<comment type="function">
    <text evidence="1">Hydrolyzes ribosome-free peptidyl-tRNAs (with 1 or more amino acids incorporated), which drop off the ribosome during protein synthesis, or as a result of ribosome stalling.</text>
</comment>
<comment type="function">
    <text evidence="1">Catalyzes the release of premature peptidyl moieties from peptidyl-tRNA molecules trapped in stalled 50S ribosomal subunits, and thus maintains levels of free tRNAs and 50S ribosomes.</text>
</comment>
<comment type="catalytic activity">
    <reaction evidence="1">
        <text>an N-acyl-L-alpha-aminoacyl-tRNA + H2O = an N-acyl-L-amino acid + a tRNA + H(+)</text>
        <dbReference type="Rhea" id="RHEA:54448"/>
        <dbReference type="Rhea" id="RHEA-COMP:10123"/>
        <dbReference type="Rhea" id="RHEA-COMP:13883"/>
        <dbReference type="ChEBI" id="CHEBI:15377"/>
        <dbReference type="ChEBI" id="CHEBI:15378"/>
        <dbReference type="ChEBI" id="CHEBI:59874"/>
        <dbReference type="ChEBI" id="CHEBI:78442"/>
        <dbReference type="ChEBI" id="CHEBI:138191"/>
        <dbReference type="EC" id="3.1.1.29"/>
    </reaction>
</comment>
<comment type="subunit">
    <text evidence="1">Monomer.</text>
</comment>
<comment type="subcellular location">
    <subcellularLocation>
        <location evidence="1">Cytoplasm</location>
    </subcellularLocation>
</comment>
<comment type="similarity">
    <text evidence="1">Belongs to the PTH family.</text>
</comment>
<accession>A9MVZ4</accession>
<feature type="chain" id="PRO_1000075354" description="Peptidyl-tRNA hydrolase">
    <location>
        <begin position="1"/>
        <end position="194"/>
    </location>
</feature>
<feature type="active site" description="Proton acceptor" evidence="1">
    <location>
        <position position="21"/>
    </location>
</feature>
<feature type="binding site" evidence="1">
    <location>
        <position position="16"/>
    </location>
    <ligand>
        <name>tRNA</name>
        <dbReference type="ChEBI" id="CHEBI:17843"/>
    </ligand>
</feature>
<feature type="binding site" evidence="1">
    <location>
        <position position="67"/>
    </location>
    <ligand>
        <name>tRNA</name>
        <dbReference type="ChEBI" id="CHEBI:17843"/>
    </ligand>
</feature>
<feature type="binding site" evidence="1">
    <location>
        <position position="69"/>
    </location>
    <ligand>
        <name>tRNA</name>
        <dbReference type="ChEBI" id="CHEBI:17843"/>
    </ligand>
</feature>
<feature type="binding site" evidence="1">
    <location>
        <position position="115"/>
    </location>
    <ligand>
        <name>tRNA</name>
        <dbReference type="ChEBI" id="CHEBI:17843"/>
    </ligand>
</feature>
<feature type="site" description="Discriminates between blocked and unblocked aminoacyl-tRNA" evidence="1">
    <location>
        <position position="11"/>
    </location>
</feature>
<feature type="site" description="Stabilizes the basic form of H active site to accept a proton" evidence="1">
    <location>
        <position position="94"/>
    </location>
</feature>
<organism>
    <name type="scientific">Salmonella paratyphi B (strain ATCC BAA-1250 / SPB7)</name>
    <dbReference type="NCBI Taxonomy" id="1016998"/>
    <lineage>
        <taxon>Bacteria</taxon>
        <taxon>Pseudomonadati</taxon>
        <taxon>Pseudomonadota</taxon>
        <taxon>Gammaproteobacteria</taxon>
        <taxon>Enterobacterales</taxon>
        <taxon>Enterobacteriaceae</taxon>
        <taxon>Salmonella</taxon>
    </lineage>
</organism>
<dbReference type="EC" id="3.1.1.29" evidence="1"/>
<dbReference type="EMBL" id="CP000886">
    <property type="protein sequence ID" value="ABX66850.1"/>
    <property type="molecule type" value="Genomic_DNA"/>
</dbReference>
<dbReference type="SMR" id="A9MVZ4"/>
<dbReference type="KEGG" id="spq:SPAB_01443"/>
<dbReference type="PATRIC" id="fig|1016998.12.peg.1363"/>
<dbReference type="HOGENOM" id="CLU_062456_3_1_6"/>
<dbReference type="Proteomes" id="UP000008556">
    <property type="component" value="Chromosome"/>
</dbReference>
<dbReference type="GO" id="GO:0005737">
    <property type="term" value="C:cytoplasm"/>
    <property type="evidence" value="ECO:0007669"/>
    <property type="project" value="UniProtKB-SubCell"/>
</dbReference>
<dbReference type="GO" id="GO:0004045">
    <property type="term" value="F:peptidyl-tRNA hydrolase activity"/>
    <property type="evidence" value="ECO:0007669"/>
    <property type="project" value="UniProtKB-UniRule"/>
</dbReference>
<dbReference type="GO" id="GO:0000049">
    <property type="term" value="F:tRNA binding"/>
    <property type="evidence" value="ECO:0007669"/>
    <property type="project" value="UniProtKB-UniRule"/>
</dbReference>
<dbReference type="GO" id="GO:0006515">
    <property type="term" value="P:protein quality control for misfolded or incompletely synthesized proteins"/>
    <property type="evidence" value="ECO:0007669"/>
    <property type="project" value="UniProtKB-UniRule"/>
</dbReference>
<dbReference type="GO" id="GO:0072344">
    <property type="term" value="P:rescue of stalled ribosome"/>
    <property type="evidence" value="ECO:0007669"/>
    <property type="project" value="UniProtKB-UniRule"/>
</dbReference>
<dbReference type="CDD" id="cd00462">
    <property type="entry name" value="PTH"/>
    <property type="match status" value="1"/>
</dbReference>
<dbReference type="FunFam" id="3.40.50.1470:FF:000001">
    <property type="entry name" value="Peptidyl-tRNA hydrolase"/>
    <property type="match status" value="1"/>
</dbReference>
<dbReference type="Gene3D" id="3.40.50.1470">
    <property type="entry name" value="Peptidyl-tRNA hydrolase"/>
    <property type="match status" value="1"/>
</dbReference>
<dbReference type="HAMAP" id="MF_00083">
    <property type="entry name" value="Pept_tRNA_hydro_bact"/>
    <property type="match status" value="1"/>
</dbReference>
<dbReference type="InterPro" id="IPR001328">
    <property type="entry name" value="Pept_tRNA_hydro"/>
</dbReference>
<dbReference type="InterPro" id="IPR018171">
    <property type="entry name" value="Pept_tRNA_hydro_CS"/>
</dbReference>
<dbReference type="InterPro" id="IPR036416">
    <property type="entry name" value="Pept_tRNA_hydro_sf"/>
</dbReference>
<dbReference type="NCBIfam" id="TIGR00447">
    <property type="entry name" value="pth"/>
    <property type="match status" value="1"/>
</dbReference>
<dbReference type="PANTHER" id="PTHR17224">
    <property type="entry name" value="PEPTIDYL-TRNA HYDROLASE"/>
    <property type="match status" value="1"/>
</dbReference>
<dbReference type="PANTHER" id="PTHR17224:SF1">
    <property type="entry name" value="PEPTIDYL-TRNA HYDROLASE"/>
    <property type="match status" value="1"/>
</dbReference>
<dbReference type="Pfam" id="PF01195">
    <property type="entry name" value="Pept_tRNA_hydro"/>
    <property type="match status" value="1"/>
</dbReference>
<dbReference type="SUPFAM" id="SSF53178">
    <property type="entry name" value="Peptidyl-tRNA hydrolase-like"/>
    <property type="match status" value="1"/>
</dbReference>
<dbReference type="PROSITE" id="PS01195">
    <property type="entry name" value="PEPT_TRNA_HYDROL_1"/>
    <property type="match status" value="1"/>
</dbReference>
<dbReference type="PROSITE" id="PS01196">
    <property type="entry name" value="PEPT_TRNA_HYDROL_2"/>
    <property type="match status" value="1"/>
</dbReference>